<keyword id="KW-0029">Amino-acid transport</keyword>
<keyword id="KW-0472">Membrane</keyword>
<keyword id="KW-1185">Reference proteome</keyword>
<keyword id="KW-0812">Transmembrane</keyword>
<keyword id="KW-1133">Transmembrane helix</keyword>
<keyword id="KW-0813">Transport</keyword>
<comment type="subcellular location">
    <subcellularLocation>
        <location evidence="1">Membrane</location>
        <topology evidence="1">Multi-pass membrane protein</topology>
    </subcellularLocation>
</comment>
<comment type="similarity">
    <text evidence="3">Belongs to the amino acid/polyamine transporter 2 family. Amino acid/auxin permease (AAAP) (TC 2.A.18.6) subfamily.</text>
</comment>
<comment type="sequence caution" evidence="3">
    <conflict type="erroneous gene model prediction">
        <sequence resource="EMBL-CDS" id="AAM15348"/>
    </conflict>
</comment>
<gene>
    <name evidence="2" type="primary">AVT6D</name>
    <name evidence="4" type="ordered locus">At2g40420</name>
    <name evidence="5" type="ORF">T3G21.19</name>
</gene>
<reference key="1">
    <citation type="journal article" date="1999" name="Nature">
        <title>Sequence and analysis of chromosome 2 of the plant Arabidopsis thaliana.</title>
        <authorList>
            <person name="Lin X."/>
            <person name="Kaul S."/>
            <person name="Rounsley S.D."/>
            <person name="Shea T.P."/>
            <person name="Benito M.-I."/>
            <person name="Town C.D."/>
            <person name="Fujii C.Y."/>
            <person name="Mason T.M."/>
            <person name="Bowman C.L."/>
            <person name="Barnstead M.E."/>
            <person name="Feldblyum T.V."/>
            <person name="Buell C.R."/>
            <person name="Ketchum K.A."/>
            <person name="Lee J.J."/>
            <person name="Ronning C.M."/>
            <person name="Koo H.L."/>
            <person name="Moffat K.S."/>
            <person name="Cronin L.A."/>
            <person name="Shen M."/>
            <person name="Pai G."/>
            <person name="Van Aken S."/>
            <person name="Umayam L."/>
            <person name="Tallon L.J."/>
            <person name="Gill J.E."/>
            <person name="Adams M.D."/>
            <person name="Carrera A.J."/>
            <person name="Creasy T.H."/>
            <person name="Goodman H.M."/>
            <person name="Somerville C.R."/>
            <person name="Copenhaver G.P."/>
            <person name="Preuss D."/>
            <person name="Nierman W.C."/>
            <person name="White O."/>
            <person name="Eisen J.A."/>
            <person name="Salzberg S.L."/>
            <person name="Fraser C.M."/>
            <person name="Venter J.C."/>
        </authorList>
    </citation>
    <scope>NUCLEOTIDE SEQUENCE [LARGE SCALE GENOMIC DNA]</scope>
    <source>
        <strain>cv. Columbia</strain>
    </source>
</reference>
<reference key="2">
    <citation type="journal article" date="2017" name="Plant J.">
        <title>Araport11: a complete reannotation of the Arabidopsis thaliana reference genome.</title>
        <authorList>
            <person name="Cheng C.Y."/>
            <person name="Krishnakumar V."/>
            <person name="Chan A.P."/>
            <person name="Thibaud-Nissen F."/>
            <person name="Schobel S."/>
            <person name="Town C.D."/>
        </authorList>
    </citation>
    <scope>GENOME REANNOTATION</scope>
    <source>
        <strain>cv. Columbia</strain>
    </source>
</reference>
<reference key="3">
    <citation type="submission" date="2006-07" db="EMBL/GenBank/DDBJ databases">
        <title>Large-scale analysis of RIKEN Arabidopsis full-length (RAFL) cDNAs.</title>
        <authorList>
            <person name="Totoki Y."/>
            <person name="Seki M."/>
            <person name="Ishida J."/>
            <person name="Nakajima M."/>
            <person name="Enju A."/>
            <person name="Kamiya A."/>
            <person name="Narusaka M."/>
            <person name="Shin-i T."/>
            <person name="Nakagawa M."/>
            <person name="Sakamoto N."/>
            <person name="Oishi K."/>
            <person name="Kohara Y."/>
            <person name="Kobayashi M."/>
            <person name="Toyoda A."/>
            <person name="Sakaki Y."/>
            <person name="Sakurai T."/>
            <person name="Iida K."/>
            <person name="Akiyama K."/>
            <person name="Satou M."/>
            <person name="Toyoda T."/>
            <person name="Konagaya A."/>
            <person name="Carninci P."/>
            <person name="Kawai J."/>
            <person name="Hayashizaki Y."/>
            <person name="Shinozaki K."/>
        </authorList>
    </citation>
    <scope>NUCLEOTIDE SEQUENCE [LARGE SCALE MRNA]</scope>
    <source>
        <strain>cv. Columbia</strain>
    </source>
</reference>
<reference key="4">
    <citation type="journal article" date="2017" name="FEBS Lett.">
        <title>Functional identification of AtAVT3, a family of vacuolar amino acid transporters, in Arabidopsis.</title>
        <authorList>
            <person name="Fujiki Y."/>
            <person name="Teshima H."/>
            <person name="Kashiwao S."/>
            <person name="Kawano-Kawada M."/>
            <person name="Ohsumi Y."/>
            <person name="Kakinuma Y."/>
            <person name="Sekito T."/>
        </authorList>
    </citation>
    <scope>GENE FAMILY</scope>
    <scope>NOMENCLATURE</scope>
</reference>
<organism>
    <name type="scientific">Arabidopsis thaliana</name>
    <name type="common">Mouse-ear cress</name>
    <dbReference type="NCBI Taxonomy" id="3702"/>
    <lineage>
        <taxon>Eukaryota</taxon>
        <taxon>Viridiplantae</taxon>
        <taxon>Streptophyta</taxon>
        <taxon>Embryophyta</taxon>
        <taxon>Tracheophyta</taxon>
        <taxon>Spermatophyta</taxon>
        <taxon>Magnoliopsida</taxon>
        <taxon>eudicotyledons</taxon>
        <taxon>Gunneridae</taxon>
        <taxon>Pentapetalae</taxon>
        <taxon>rosids</taxon>
        <taxon>malvids</taxon>
        <taxon>Brassicales</taxon>
        <taxon>Brassicaceae</taxon>
        <taxon>Camelineae</taxon>
        <taxon>Arabidopsis</taxon>
    </lineage>
</organism>
<feature type="chain" id="PRO_0000440115" description="Amino acid transporter AVT6D">
    <location>
        <begin position="1"/>
        <end position="440"/>
    </location>
</feature>
<feature type="transmembrane region" description="Helical; Name=1" evidence="1">
    <location>
        <begin position="26"/>
        <end position="46"/>
    </location>
</feature>
<feature type="transmembrane region" description="Helical; Name=2" evidence="1">
    <location>
        <begin position="47"/>
        <end position="67"/>
    </location>
</feature>
<feature type="transmembrane region" description="Helical; Name=3" evidence="1">
    <location>
        <begin position="102"/>
        <end position="122"/>
    </location>
</feature>
<feature type="transmembrane region" description="Helical; Name=4" evidence="1">
    <location>
        <begin position="149"/>
        <end position="169"/>
    </location>
</feature>
<feature type="transmembrane region" description="Helical; Name=5" evidence="1">
    <location>
        <begin position="182"/>
        <end position="202"/>
    </location>
</feature>
<feature type="transmembrane region" description="Helical; Name=6" evidence="1">
    <location>
        <begin position="219"/>
        <end position="239"/>
    </location>
</feature>
<feature type="transmembrane region" description="Helical; Name=7" evidence="1">
    <location>
        <begin position="262"/>
        <end position="282"/>
    </location>
</feature>
<feature type="transmembrane region" description="Helical; Name=8" evidence="1">
    <location>
        <begin position="309"/>
        <end position="329"/>
    </location>
</feature>
<feature type="transmembrane region" description="Helical; Name=9" evidence="1">
    <location>
        <begin position="356"/>
        <end position="376"/>
    </location>
</feature>
<feature type="transmembrane region" description="Helical; Name=10" evidence="1">
    <location>
        <begin position="377"/>
        <end position="397"/>
    </location>
</feature>
<feature type="transmembrane region" description="Helical; Name=11" evidence="1">
    <location>
        <begin position="410"/>
        <end position="430"/>
    </location>
</feature>
<evidence type="ECO:0000255" key="1"/>
<evidence type="ECO:0000303" key="2">
    <source>
    </source>
</evidence>
<evidence type="ECO:0000305" key="3"/>
<evidence type="ECO:0000312" key="4">
    <source>
        <dbReference type="Araport" id="AT2G40420"/>
    </source>
</evidence>
<evidence type="ECO:0000312" key="5">
    <source>
        <dbReference type="EMBL" id="AAM15348.1"/>
    </source>
</evidence>
<accession>Q0WQJ3</accession>
<accession>Q8S8E1</accession>
<dbReference type="EMBL" id="AC007020">
    <property type="protein sequence ID" value="AAM15348.1"/>
    <property type="status" value="ALT_SEQ"/>
    <property type="molecule type" value="Genomic_DNA"/>
</dbReference>
<dbReference type="EMBL" id="CP002685">
    <property type="protein sequence ID" value="AEC09826.1"/>
    <property type="molecule type" value="Genomic_DNA"/>
</dbReference>
<dbReference type="EMBL" id="AK228702">
    <property type="protein sequence ID" value="BAF00606.1"/>
    <property type="molecule type" value="mRNA"/>
</dbReference>
<dbReference type="PIR" id="C84829">
    <property type="entry name" value="C84829"/>
</dbReference>
<dbReference type="RefSeq" id="NP_181573.3">
    <property type="nucleotide sequence ID" value="NM_129602.5"/>
</dbReference>
<dbReference type="SMR" id="Q0WQJ3"/>
<dbReference type="FunCoup" id="Q0WQJ3">
    <property type="interactions" value="963"/>
</dbReference>
<dbReference type="STRING" id="3702.Q0WQJ3"/>
<dbReference type="PaxDb" id="3702-AT2G40420.1"/>
<dbReference type="ProteomicsDB" id="240940"/>
<dbReference type="EnsemblPlants" id="AT2G40420.1">
    <property type="protein sequence ID" value="AT2G40420.1"/>
    <property type="gene ID" value="AT2G40420"/>
</dbReference>
<dbReference type="GeneID" id="818635"/>
<dbReference type="Gramene" id="AT2G40420.1">
    <property type="protein sequence ID" value="AT2G40420.1"/>
    <property type="gene ID" value="AT2G40420"/>
</dbReference>
<dbReference type="KEGG" id="ath:AT2G40420"/>
<dbReference type="Araport" id="AT2G40420"/>
<dbReference type="TAIR" id="AT2G40420"/>
<dbReference type="eggNOG" id="KOG1305">
    <property type="taxonomic scope" value="Eukaryota"/>
</dbReference>
<dbReference type="HOGENOM" id="CLU_034419_2_0_1"/>
<dbReference type="InParanoid" id="Q0WQJ3"/>
<dbReference type="OMA" id="FAFTGHQ"/>
<dbReference type="PhylomeDB" id="Q0WQJ3"/>
<dbReference type="PRO" id="PR:Q0WQJ3"/>
<dbReference type="Proteomes" id="UP000006548">
    <property type="component" value="Chromosome 2"/>
</dbReference>
<dbReference type="ExpressionAtlas" id="Q0WQJ3">
    <property type="expression patterns" value="baseline and differential"/>
</dbReference>
<dbReference type="GO" id="GO:0031090">
    <property type="term" value="C:organelle membrane"/>
    <property type="evidence" value="ECO:0007669"/>
    <property type="project" value="UniProtKB-ARBA"/>
</dbReference>
<dbReference type="GO" id="GO:0000325">
    <property type="term" value="C:plant-type vacuole"/>
    <property type="evidence" value="ECO:0007005"/>
    <property type="project" value="TAIR"/>
</dbReference>
<dbReference type="GO" id="GO:0006865">
    <property type="term" value="P:amino acid transport"/>
    <property type="evidence" value="ECO:0007669"/>
    <property type="project" value="UniProtKB-KW"/>
</dbReference>
<dbReference type="InterPro" id="IPR013057">
    <property type="entry name" value="AA_transpt_TM"/>
</dbReference>
<dbReference type="PANTHER" id="PTHR22950">
    <property type="entry name" value="AMINO ACID TRANSPORTER"/>
    <property type="match status" value="1"/>
</dbReference>
<dbReference type="PANTHER" id="PTHR22950:SF625">
    <property type="entry name" value="AMINO ACID TRANSPORTER AVT6D"/>
    <property type="match status" value="1"/>
</dbReference>
<dbReference type="Pfam" id="PF01490">
    <property type="entry name" value="Aa_trans"/>
    <property type="match status" value="1"/>
</dbReference>
<sequence>MSPAIKAPLLPNQEPSSSSSENHGSFAGAVFNISTSIVGAGIMAIPAAFKVLGVIPSLSIIVIIAWLSNVSAGFLMKSSLAGESTTYAGVMKESFGKSGAVAVTVVTMVVTFGSMIIFSIIIGDVISGNEKDGIIHLGLLQEWFGSHWWNTRFFGLLFIFVFLFLPLVLCRRVERLAFSSAISFLLALLFVVISSVLAIIALVQGKTKPPRLFPELNDGGLSFFSLFTASPVIVTAFTFHFNVHPVAFELKDPLNVLSATRISVILCATIYSATGLFCYLLFGDSTMTDVLMNFDQSTSSSVGSLLNDIVRLSYAIHLMLVFPLLNFSLRANLDELLFPMKLSLVEDNKRFFALTFPLLISCFLGAIAIPDIWYFFQFLGSTSTVSIAFIFPAAIVLRNVNGFSTLREKIVASVMLVLAVATSIIAISTNIYTFTATEET</sequence>
<name>AVT6D_ARATH</name>
<protein>
    <recommendedName>
        <fullName evidence="3">Amino acid transporter AVT6D</fullName>
        <shortName evidence="2">AtAvt6D</shortName>
    </recommendedName>
</protein>
<proteinExistence type="evidence at transcript level"/>